<reference key="1">
    <citation type="submission" date="2005-07" db="EMBL/GenBank/DDBJ databases">
        <title>Complete sequence of Synechococcus sp. CC9605.</title>
        <authorList>
            <consortium name="US DOE Joint Genome Institute"/>
            <person name="Copeland A."/>
            <person name="Lucas S."/>
            <person name="Lapidus A."/>
            <person name="Barry K."/>
            <person name="Detter J.C."/>
            <person name="Glavina T."/>
            <person name="Hammon N."/>
            <person name="Israni S."/>
            <person name="Pitluck S."/>
            <person name="Schmutz J."/>
            <person name="Martinez M."/>
            <person name="Larimer F."/>
            <person name="Land M."/>
            <person name="Kyrpides N."/>
            <person name="Ivanova N."/>
            <person name="Richardson P."/>
        </authorList>
    </citation>
    <scope>NUCLEOTIDE SEQUENCE [LARGE SCALE GENOMIC DNA]</scope>
    <source>
        <strain>CC9605</strain>
    </source>
</reference>
<dbReference type="EC" id="4.3.2.10" evidence="1"/>
<dbReference type="EMBL" id="CP000110">
    <property type="protein sequence ID" value="ABB34576.1"/>
    <property type="molecule type" value="Genomic_DNA"/>
</dbReference>
<dbReference type="RefSeq" id="WP_011363801.1">
    <property type="nucleotide sequence ID" value="NC_007516.1"/>
</dbReference>
<dbReference type="SMR" id="Q3ALF6"/>
<dbReference type="STRING" id="110662.Syncc9605_0808"/>
<dbReference type="KEGG" id="syd:Syncc9605_0808"/>
<dbReference type="eggNOG" id="COG0107">
    <property type="taxonomic scope" value="Bacteria"/>
</dbReference>
<dbReference type="HOGENOM" id="CLU_048577_4_0_3"/>
<dbReference type="OrthoDB" id="9781903at2"/>
<dbReference type="UniPathway" id="UPA00031">
    <property type="reaction ID" value="UER00010"/>
</dbReference>
<dbReference type="GO" id="GO:0005737">
    <property type="term" value="C:cytoplasm"/>
    <property type="evidence" value="ECO:0007669"/>
    <property type="project" value="UniProtKB-SubCell"/>
</dbReference>
<dbReference type="GO" id="GO:0000107">
    <property type="term" value="F:imidazoleglycerol-phosphate synthase activity"/>
    <property type="evidence" value="ECO:0007669"/>
    <property type="project" value="UniProtKB-UniRule"/>
</dbReference>
<dbReference type="GO" id="GO:0016829">
    <property type="term" value="F:lyase activity"/>
    <property type="evidence" value="ECO:0007669"/>
    <property type="project" value="UniProtKB-KW"/>
</dbReference>
<dbReference type="GO" id="GO:0000105">
    <property type="term" value="P:L-histidine biosynthetic process"/>
    <property type="evidence" value="ECO:0007669"/>
    <property type="project" value="UniProtKB-UniRule"/>
</dbReference>
<dbReference type="CDD" id="cd04731">
    <property type="entry name" value="HisF"/>
    <property type="match status" value="1"/>
</dbReference>
<dbReference type="FunFam" id="3.20.20.70:FF:000006">
    <property type="entry name" value="Imidazole glycerol phosphate synthase subunit HisF"/>
    <property type="match status" value="1"/>
</dbReference>
<dbReference type="Gene3D" id="3.20.20.70">
    <property type="entry name" value="Aldolase class I"/>
    <property type="match status" value="1"/>
</dbReference>
<dbReference type="HAMAP" id="MF_01013">
    <property type="entry name" value="HisF"/>
    <property type="match status" value="1"/>
</dbReference>
<dbReference type="InterPro" id="IPR013785">
    <property type="entry name" value="Aldolase_TIM"/>
</dbReference>
<dbReference type="InterPro" id="IPR006062">
    <property type="entry name" value="His_biosynth"/>
</dbReference>
<dbReference type="InterPro" id="IPR004651">
    <property type="entry name" value="HisF"/>
</dbReference>
<dbReference type="InterPro" id="IPR050064">
    <property type="entry name" value="IGPS_HisA/HisF"/>
</dbReference>
<dbReference type="InterPro" id="IPR011060">
    <property type="entry name" value="RibuloseP-bd_barrel"/>
</dbReference>
<dbReference type="NCBIfam" id="TIGR00735">
    <property type="entry name" value="hisF"/>
    <property type="match status" value="1"/>
</dbReference>
<dbReference type="PANTHER" id="PTHR21235:SF2">
    <property type="entry name" value="IMIDAZOLE GLYCEROL PHOSPHATE SYNTHASE HISHF"/>
    <property type="match status" value="1"/>
</dbReference>
<dbReference type="PANTHER" id="PTHR21235">
    <property type="entry name" value="IMIDAZOLE GLYCEROL PHOSPHATE SYNTHASE SUBUNIT HISF/H IGP SYNTHASE SUBUNIT HISF/H"/>
    <property type="match status" value="1"/>
</dbReference>
<dbReference type="Pfam" id="PF00977">
    <property type="entry name" value="His_biosynth"/>
    <property type="match status" value="1"/>
</dbReference>
<dbReference type="SUPFAM" id="SSF51366">
    <property type="entry name" value="Ribulose-phoshate binding barrel"/>
    <property type="match status" value="1"/>
</dbReference>
<accession>Q3ALF6</accession>
<evidence type="ECO:0000255" key="1">
    <source>
        <dbReference type="HAMAP-Rule" id="MF_01013"/>
    </source>
</evidence>
<name>HIS6_SYNSC</name>
<protein>
    <recommendedName>
        <fullName evidence="1">Imidazole glycerol phosphate synthase subunit HisF</fullName>
        <ecNumber evidence="1">4.3.2.10</ecNumber>
    </recommendedName>
    <alternativeName>
        <fullName evidence="1">IGP synthase cyclase subunit</fullName>
    </alternativeName>
    <alternativeName>
        <fullName evidence="1">IGP synthase subunit HisF</fullName>
    </alternativeName>
    <alternativeName>
        <fullName evidence="1">ImGP synthase subunit HisF</fullName>
        <shortName evidence="1">IGPS subunit HisF</shortName>
    </alternativeName>
</protein>
<proteinExistence type="inferred from homology"/>
<sequence length="256" mass="26633">MVALRLIPCLDVARGRVVKGVNFVGLRDAGDPVELACRYSRAGADELVFLDIAASHEGRGTLIDMVRRTAESVTIPFTVGGGISTVEGITELLRAGADKVSLNSSAVRRPELVREGADQFGCQCIVVAIDARRRDAGGWDVYVKGGRENTGLDVVEWAQRVAGLGAGEILLTSMDGDGTQAGYDLALTRAVADAVPIPVIASGGAGCLDHIAEALDVGPTGGHASAALLASLLHDGVLTVEEIKQDLLSRGLTIRP</sequence>
<organism>
    <name type="scientific">Synechococcus sp. (strain CC9605)</name>
    <dbReference type="NCBI Taxonomy" id="110662"/>
    <lineage>
        <taxon>Bacteria</taxon>
        <taxon>Bacillati</taxon>
        <taxon>Cyanobacteriota</taxon>
        <taxon>Cyanophyceae</taxon>
        <taxon>Synechococcales</taxon>
        <taxon>Synechococcaceae</taxon>
        <taxon>Synechococcus</taxon>
    </lineage>
</organism>
<comment type="function">
    <text evidence="1">IGPS catalyzes the conversion of PRFAR and glutamine to IGP, AICAR and glutamate. The HisF subunit catalyzes the cyclization activity that produces IGP and AICAR from PRFAR using the ammonia provided by the HisH subunit.</text>
</comment>
<comment type="catalytic activity">
    <reaction evidence="1">
        <text>5-[(5-phospho-1-deoxy-D-ribulos-1-ylimino)methylamino]-1-(5-phospho-beta-D-ribosyl)imidazole-4-carboxamide + L-glutamine = D-erythro-1-(imidazol-4-yl)glycerol 3-phosphate + 5-amino-1-(5-phospho-beta-D-ribosyl)imidazole-4-carboxamide + L-glutamate + H(+)</text>
        <dbReference type="Rhea" id="RHEA:24793"/>
        <dbReference type="ChEBI" id="CHEBI:15378"/>
        <dbReference type="ChEBI" id="CHEBI:29985"/>
        <dbReference type="ChEBI" id="CHEBI:58278"/>
        <dbReference type="ChEBI" id="CHEBI:58359"/>
        <dbReference type="ChEBI" id="CHEBI:58475"/>
        <dbReference type="ChEBI" id="CHEBI:58525"/>
        <dbReference type="EC" id="4.3.2.10"/>
    </reaction>
</comment>
<comment type="pathway">
    <text evidence="1">Amino-acid biosynthesis; L-histidine biosynthesis; L-histidine from 5-phospho-alpha-D-ribose 1-diphosphate: step 5/9.</text>
</comment>
<comment type="subunit">
    <text evidence="1">Heterodimer of HisH and HisF.</text>
</comment>
<comment type="subcellular location">
    <subcellularLocation>
        <location evidence="1">Cytoplasm</location>
    </subcellularLocation>
</comment>
<comment type="similarity">
    <text evidence="1">Belongs to the HisA/HisF family.</text>
</comment>
<gene>
    <name evidence="1" type="primary">hisF</name>
    <name type="ordered locus">Syncc9605_0808</name>
</gene>
<keyword id="KW-0028">Amino-acid biosynthesis</keyword>
<keyword id="KW-0963">Cytoplasm</keyword>
<keyword id="KW-0368">Histidine biosynthesis</keyword>
<keyword id="KW-0456">Lyase</keyword>
<feature type="chain" id="PRO_1000063166" description="Imidazole glycerol phosphate synthase subunit HisF">
    <location>
        <begin position="1"/>
        <end position="256"/>
    </location>
</feature>
<feature type="active site" evidence="1">
    <location>
        <position position="11"/>
    </location>
</feature>
<feature type="active site" evidence="1">
    <location>
        <position position="130"/>
    </location>
</feature>